<sequence length="270" mass="30334">MDNKIVYVVSDSVGETADLVVRAAMGQFPFAPDIRRVPYVEDTGTLKEVISIAKSNQALICFTLVKPDMRQYLVTEAAKEGVEAYDIIGPLIDQIEEITGQVPRYEPGVVRRLDEEYFKKIEAIEFAVKYDDGRDARGILKADIVLIGISRTSKTPLSQYLAHNKRLKVANVPLVPEVDPPEELYQVAKEKCFGLKITPEKLNHIRKERLKSLGLSDGATYANINRIKEEIDHFENVVSKINCQVIDVSNKAIEETANIIVNAVQNQKMF</sequence>
<keyword id="KW-0418">Kinase</keyword>
<keyword id="KW-0547">Nucleotide-binding</keyword>
<keyword id="KW-0723">Serine/threonine-protein kinase</keyword>
<keyword id="KW-0808">Transferase</keyword>
<evidence type="ECO:0000255" key="1">
    <source>
        <dbReference type="HAMAP-Rule" id="MF_00921"/>
    </source>
</evidence>
<protein>
    <recommendedName>
        <fullName evidence="1">Putative pyruvate, phosphate dikinase regulatory protein</fullName>
        <shortName evidence="1">PPDK regulatory protein</shortName>
        <ecNumber evidence="1">2.7.11.32</ecNumber>
        <ecNumber evidence="1">2.7.4.27</ecNumber>
    </recommendedName>
</protein>
<organism>
    <name type="scientific">Bacillus cereus (strain AH820)</name>
    <dbReference type="NCBI Taxonomy" id="405535"/>
    <lineage>
        <taxon>Bacteria</taxon>
        <taxon>Bacillati</taxon>
        <taxon>Bacillota</taxon>
        <taxon>Bacilli</taxon>
        <taxon>Bacillales</taxon>
        <taxon>Bacillaceae</taxon>
        <taxon>Bacillus</taxon>
        <taxon>Bacillus cereus group</taxon>
    </lineage>
</organism>
<proteinExistence type="inferred from homology"/>
<accession>B7JN21</accession>
<reference key="1">
    <citation type="submission" date="2008-10" db="EMBL/GenBank/DDBJ databases">
        <title>Genome sequence of Bacillus cereus AH820.</title>
        <authorList>
            <person name="Dodson R.J."/>
            <person name="Durkin A.S."/>
            <person name="Rosovitz M.J."/>
            <person name="Rasko D.A."/>
            <person name="Hoffmaster A."/>
            <person name="Ravel J."/>
            <person name="Sutton G."/>
        </authorList>
    </citation>
    <scope>NUCLEOTIDE SEQUENCE [LARGE SCALE GENOMIC DNA]</scope>
    <source>
        <strain>AH820</strain>
    </source>
</reference>
<dbReference type="EC" id="2.7.11.32" evidence="1"/>
<dbReference type="EC" id="2.7.4.27" evidence="1"/>
<dbReference type="EMBL" id="CP001283">
    <property type="protein sequence ID" value="ACK87683.1"/>
    <property type="molecule type" value="Genomic_DNA"/>
</dbReference>
<dbReference type="RefSeq" id="WP_000368943.1">
    <property type="nucleotide sequence ID" value="NC_011773.1"/>
</dbReference>
<dbReference type="SMR" id="B7JN21"/>
<dbReference type="KEGG" id="bcu:BCAH820_4318"/>
<dbReference type="HOGENOM" id="CLU_046206_2_1_9"/>
<dbReference type="Proteomes" id="UP000001363">
    <property type="component" value="Chromosome"/>
</dbReference>
<dbReference type="GO" id="GO:0043531">
    <property type="term" value="F:ADP binding"/>
    <property type="evidence" value="ECO:0007669"/>
    <property type="project" value="UniProtKB-UniRule"/>
</dbReference>
<dbReference type="GO" id="GO:0005524">
    <property type="term" value="F:ATP binding"/>
    <property type="evidence" value="ECO:0007669"/>
    <property type="project" value="InterPro"/>
</dbReference>
<dbReference type="GO" id="GO:0016776">
    <property type="term" value="F:phosphotransferase activity, phosphate group as acceptor"/>
    <property type="evidence" value="ECO:0007669"/>
    <property type="project" value="UniProtKB-UniRule"/>
</dbReference>
<dbReference type="GO" id="GO:0004674">
    <property type="term" value="F:protein serine/threonine kinase activity"/>
    <property type="evidence" value="ECO:0007669"/>
    <property type="project" value="UniProtKB-UniRule"/>
</dbReference>
<dbReference type="HAMAP" id="MF_00921">
    <property type="entry name" value="PDRP"/>
    <property type="match status" value="1"/>
</dbReference>
<dbReference type="InterPro" id="IPR005177">
    <property type="entry name" value="Kinase-pyrophosphorylase"/>
</dbReference>
<dbReference type="InterPro" id="IPR026565">
    <property type="entry name" value="PPDK_reg"/>
</dbReference>
<dbReference type="NCBIfam" id="NF003742">
    <property type="entry name" value="PRK05339.1"/>
    <property type="match status" value="1"/>
</dbReference>
<dbReference type="PANTHER" id="PTHR31756">
    <property type="entry name" value="PYRUVATE, PHOSPHATE DIKINASE REGULATORY PROTEIN 1, CHLOROPLASTIC"/>
    <property type="match status" value="1"/>
</dbReference>
<dbReference type="PANTHER" id="PTHR31756:SF3">
    <property type="entry name" value="PYRUVATE, PHOSPHATE DIKINASE REGULATORY PROTEIN 1, CHLOROPLASTIC"/>
    <property type="match status" value="1"/>
</dbReference>
<dbReference type="Pfam" id="PF03618">
    <property type="entry name" value="Kinase-PPPase"/>
    <property type="match status" value="1"/>
</dbReference>
<feature type="chain" id="PRO_1000136451" description="Putative pyruvate, phosphate dikinase regulatory protein">
    <location>
        <begin position="1"/>
        <end position="270"/>
    </location>
</feature>
<feature type="binding site" evidence="1">
    <location>
        <begin position="148"/>
        <end position="155"/>
    </location>
    <ligand>
        <name>ADP</name>
        <dbReference type="ChEBI" id="CHEBI:456216"/>
    </ligand>
</feature>
<comment type="function">
    <text evidence="1">Bifunctional serine/threonine kinase and phosphorylase involved in the regulation of the pyruvate, phosphate dikinase (PPDK) by catalyzing its phosphorylation/dephosphorylation.</text>
</comment>
<comment type="catalytic activity">
    <reaction evidence="1">
        <text>N(tele)-phospho-L-histidyl/L-threonyl-[pyruvate, phosphate dikinase] + ADP = N(tele)-phospho-L-histidyl/O-phospho-L-threonyl-[pyruvate, phosphate dikinase] + AMP + H(+)</text>
        <dbReference type="Rhea" id="RHEA:43692"/>
        <dbReference type="Rhea" id="RHEA-COMP:10650"/>
        <dbReference type="Rhea" id="RHEA-COMP:10651"/>
        <dbReference type="ChEBI" id="CHEBI:15378"/>
        <dbReference type="ChEBI" id="CHEBI:30013"/>
        <dbReference type="ChEBI" id="CHEBI:61977"/>
        <dbReference type="ChEBI" id="CHEBI:83586"/>
        <dbReference type="ChEBI" id="CHEBI:456215"/>
        <dbReference type="ChEBI" id="CHEBI:456216"/>
        <dbReference type="EC" id="2.7.11.32"/>
    </reaction>
</comment>
<comment type="catalytic activity">
    <reaction evidence="1">
        <text>N(tele)-phospho-L-histidyl/O-phospho-L-threonyl-[pyruvate, phosphate dikinase] + phosphate + H(+) = N(tele)-phospho-L-histidyl/L-threonyl-[pyruvate, phosphate dikinase] + diphosphate</text>
        <dbReference type="Rhea" id="RHEA:43696"/>
        <dbReference type="Rhea" id="RHEA-COMP:10650"/>
        <dbReference type="Rhea" id="RHEA-COMP:10651"/>
        <dbReference type="ChEBI" id="CHEBI:15378"/>
        <dbReference type="ChEBI" id="CHEBI:30013"/>
        <dbReference type="ChEBI" id="CHEBI:33019"/>
        <dbReference type="ChEBI" id="CHEBI:43474"/>
        <dbReference type="ChEBI" id="CHEBI:61977"/>
        <dbReference type="ChEBI" id="CHEBI:83586"/>
        <dbReference type="EC" id="2.7.4.27"/>
    </reaction>
</comment>
<comment type="similarity">
    <text evidence="1">Belongs to the pyruvate, phosphate/water dikinase regulatory protein family. PDRP subfamily.</text>
</comment>
<name>PDRP_BACC0</name>
<gene>
    <name type="ordered locus">BCAH820_4318</name>
</gene>